<gene>
    <name evidence="11" type="primary">LSM14B</name>
    <name evidence="11" type="synonym">C20orf40</name>
    <name evidence="11" type="synonym">FAM61B</name>
    <name evidence="9" type="synonym">RAP55B</name>
</gene>
<dbReference type="EMBL" id="AK058202">
    <property type="protein sequence ID" value="BAB71714.1"/>
    <property type="molecule type" value="mRNA"/>
</dbReference>
<dbReference type="EMBL" id="AL137077">
    <property type="status" value="NOT_ANNOTATED_CDS"/>
    <property type="molecule type" value="Genomic_DNA"/>
</dbReference>
<dbReference type="EMBL" id="BC057387">
    <property type="protein sequence ID" value="AAH57387.1"/>
    <property type="molecule type" value="mRNA"/>
</dbReference>
<dbReference type="EMBL" id="BX354437">
    <property type="status" value="NOT_ANNOTATED_CDS"/>
    <property type="molecule type" value="mRNA"/>
</dbReference>
<dbReference type="CCDS" id="CCDS46626.1">
    <molecule id="Q9BX40-1"/>
</dbReference>
<dbReference type="RefSeq" id="NP_653304.2">
    <molecule id="Q9BX40-1"/>
    <property type="nucleotide sequence ID" value="NM_144703.3"/>
</dbReference>
<dbReference type="SMR" id="Q9BX40"/>
<dbReference type="BioGRID" id="127252">
    <property type="interactions" value="115"/>
</dbReference>
<dbReference type="FunCoup" id="Q9BX40">
    <property type="interactions" value="2659"/>
</dbReference>
<dbReference type="IntAct" id="Q9BX40">
    <property type="interactions" value="60"/>
</dbReference>
<dbReference type="MINT" id="Q9BX40"/>
<dbReference type="STRING" id="9606.ENSP00000279068"/>
<dbReference type="GlyGen" id="Q9BX40">
    <property type="glycosylation" value="1 site, 1 O-linked glycan (1 site)"/>
</dbReference>
<dbReference type="iPTMnet" id="Q9BX40"/>
<dbReference type="MetOSite" id="Q9BX40"/>
<dbReference type="PhosphoSitePlus" id="Q9BX40"/>
<dbReference type="BioMuta" id="LSM14B"/>
<dbReference type="DMDM" id="71151896"/>
<dbReference type="jPOST" id="Q9BX40"/>
<dbReference type="MassIVE" id="Q9BX40"/>
<dbReference type="PaxDb" id="9606-ENSP00000279068"/>
<dbReference type="PeptideAtlas" id="Q9BX40"/>
<dbReference type="ProteomicsDB" id="79344">
    <molecule id="Q9BX40-1"/>
</dbReference>
<dbReference type="ProteomicsDB" id="79345">
    <molecule id="Q9BX40-2"/>
</dbReference>
<dbReference type="ProteomicsDB" id="79346">
    <molecule id="Q9BX40-3"/>
</dbReference>
<dbReference type="Pumba" id="Q9BX40"/>
<dbReference type="Antibodypedia" id="52743">
    <property type="antibodies" value="61 antibodies from 12 providers"/>
</dbReference>
<dbReference type="DNASU" id="149986"/>
<dbReference type="Ensembl" id="ENST00000279068.11">
    <molecule id="Q9BX40-1"/>
    <property type="protein sequence ID" value="ENSP00000279068.5"/>
    <property type="gene ID" value="ENSG00000149657.20"/>
</dbReference>
<dbReference type="GeneID" id="149986"/>
<dbReference type="KEGG" id="hsa:149986"/>
<dbReference type="MANE-Select" id="ENST00000279068.11">
    <property type="protein sequence ID" value="ENSP00000279068.5"/>
    <property type="RefSeq nucleotide sequence ID" value="NM_144703.3"/>
    <property type="RefSeq protein sequence ID" value="NP_653304.2"/>
</dbReference>
<dbReference type="UCSC" id="uc002ybt.3">
    <molecule id="Q9BX40-1"/>
    <property type="organism name" value="human"/>
</dbReference>
<dbReference type="AGR" id="HGNC:15887"/>
<dbReference type="CTD" id="149986"/>
<dbReference type="DisGeNET" id="149986"/>
<dbReference type="GeneCards" id="LSM14B"/>
<dbReference type="HGNC" id="HGNC:15887">
    <property type="gene designation" value="LSM14B"/>
</dbReference>
<dbReference type="HPA" id="ENSG00000149657">
    <property type="expression patterns" value="Low tissue specificity"/>
</dbReference>
<dbReference type="MIM" id="620689">
    <property type="type" value="gene"/>
</dbReference>
<dbReference type="neXtProt" id="NX_Q9BX40"/>
<dbReference type="OpenTargets" id="ENSG00000149657"/>
<dbReference type="PharmGKB" id="PA25754"/>
<dbReference type="VEuPathDB" id="HostDB:ENSG00000149657"/>
<dbReference type="eggNOG" id="KOG1073">
    <property type="taxonomic scope" value="Eukaryota"/>
</dbReference>
<dbReference type="GeneTree" id="ENSGT00940000156010"/>
<dbReference type="HOGENOM" id="CLU_019221_0_0_1"/>
<dbReference type="InParanoid" id="Q9BX40"/>
<dbReference type="OMA" id="PPKEEIY"/>
<dbReference type="OrthoDB" id="21539at2759"/>
<dbReference type="PAN-GO" id="Q9BX40">
    <property type="GO annotations" value="1 GO annotation based on evolutionary models"/>
</dbReference>
<dbReference type="PhylomeDB" id="Q9BX40"/>
<dbReference type="TreeFam" id="TF313514"/>
<dbReference type="PathwayCommons" id="Q9BX40"/>
<dbReference type="SignaLink" id="Q9BX40"/>
<dbReference type="BioGRID-ORCS" id="149986">
    <property type="hits" value="10 hits in 1156 CRISPR screens"/>
</dbReference>
<dbReference type="CD-CODE" id="232F8A39">
    <property type="entry name" value="P-body"/>
</dbReference>
<dbReference type="CD-CODE" id="DEE660B4">
    <property type="entry name" value="Stress granule"/>
</dbReference>
<dbReference type="ChiTaRS" id="LSM14B">
    <property type="organism name" value="human"/>
</dbReference>
<dbReference type="GenomeRNAi" id="149986"/>
<dbReference type="Pharos" id="Q9BX40">
    <property type="development level" value="Tdark"/>
</dbReference>
<dbReference type="PRO" id="PR:Q9BX40"/>
<dbReference type="Proteomes" id="UP000005640">
    <property type="component" value="Chromosome 20"/>
</dbReference>
<dbReference type="RNAct" id="Q9BX40">
    <property type="molecule type" value="protein"/>
</dbReference>
<dbReference type="Bgee" id="ENSG00000149657">
    <property type="expression patterns" value="Expressed in sperm and 151 other cell types or tissues"/>
</dbReference>
<dbReference type="ExpressionAtlas" id="Q9BX40">
    <property type="expression patterns" value="baseline and differential"/>
</dbReference>
<dbReference type="GO" id="GO:0036464">
    <property type="term" value="C:cytoplasmic ribonucleoprotein granule"/>
    <property type="evidence" value="ECO:0000250"/>
    <property type="project" value="UniProtKB"/>
</dbReference>
<dbReference type="GO" id="GO:1990904">
    <property type="term" value="C:ribonucleoprotein complex"/>
    <property type="evidence" value="ECO:0007669"/>
    <property type="project" value="UniProtKB-KW"/>
</dbReference>
<dbReference type="GO" id="GO:0003729">
    <property type="term" value="F:mRNA binding"/>
    <property type="evidence" value="ECO:0000318"/>
    <property type="project" value="GO_Central"/>
</dbReference>
<dbReference type="GO" id="GO:0003723">
    <property type="term" value="F:RNA binding"/>
    <property type="evidence" value="ECO:0007005"/>
    <property type="project" value="UniProtKB"/>
</dbReference>
<dbReference type="GO" id="GO:0141065">
    <property type="term" value="P:maternal mRNA clearance"/>
    <property type="evidence" value="ECO:0000250"/>
    <property type="project" value="UniProtKB"/>
</dbReference>
<dbReference type="GO" id="GO:1903537">
    <property type="term" value="P:meiotic cell cycle process involved in oocyte maturation"/>
    <property type="evidence" value="ECO:0000250"/>
    <property type="project" value="UniProtKB"/>
</dbReference>
<dbReference type="GO" id="GO:0140694">
    <property type="term" value="P:membraneless organelle assembly"/>
    <property type="evidence" value="ECO:0000250"/>
    <property type="project" value="UniProtKB"/>
</dbReference>
<dbReference type="GO" id="GO:0048477">
    <property type="term" value="P:oogenesis"/>
    <property type="evidence" value="ECO:0000250"/>
    <property type="project" value="UniProtKB"/>
</dbReference>
<dbReference type="GO" id="GO:0001541">
    <property type="term" value="P:ovarian follicle development"/>
    <property type="evidence" value="ECO:0000250"/>
    <property type="project" value="UniProtKB"/>
</dbReference>
<dbReference type="GO" id="GO:0006417">
    <property type="term" value="P:regulation of translation"/>
    <property type="evidence" value="ECO:0007669"/>
    <property type="project" value="UniProtKB-KW"/>
</dbReference>
<dbReference type="CDD" id="cd01736">
    <property type="entry name" value="LSm14_N"/>
    <property type="match status" value="1"/>
</dbReference>
<dbReference type="FunFam" id="2.30.30.100:FF:000006">
    <property type="entry name" value="Protein LSM14 homolog A isoform b"/>
    <property type="match status" value="1"/>
</dbReference>
<dbReference type="Gene3D" id="2.30.30.100">
    <property type="match status" value="1"/>
</dbReference>
<dbReference type="InterPro" id="IPR025762">
    <property type="entry name" value="DFDF"/>
</dbReference>
<dbReference type="InterPro" id="IPR019050">
    <property type="entry name" value="FDF_dom"/>
</dbReference>
<dbReference type="InterPro" id="IPR025761">
    <property type="entry name" value="FFD_box"/>
</dbReference>
<dbReference type="InterPro" id="IPR025609">
    <property type="entry name" value="Lsm14-like_N"/>
</dbReference>
<dbReference type="InterPro" id="IPR010920">
    <property type="entry name" value="LSM_dom_sf"/>
</dbReference>
<dbReference type="InterPro" id="IPR047575">
    <property type="entry name" value="Sm"/>
</dbReference>
<dbReference type="InterPro" id="IPR025768">
    <property type="entry name" value="TFG_box"/>
</dbReference>
<dbReference type="PANTHER" id="PTHR13586:SF1">
    <property type="entry name" value="PROTEIN LSM14 HOMOLOG B"/>
    <property type="match status" value="1"/>
</dbReference>
<dbReference type="PANTHER" id="PTHR13586">
    <property type="entry name" value="SCD6 PROTEIN-RELATED"/>
    <property type="match status" value="1"/>
</dbReference>
<dbReference type="Pfam" id="PF09532">
    <property type="entry name" value="FDF"/>
    <property type="match status" value="1"/>
</dbReference>
<dbReference type="Pfam" id="PF12701">
    <property type="entry name" value="LSM14"/>
    <property type="match status" value="1"/>
</dbReference>
<dbReference type="SMART" id="SM01199">
    <property type="entry name" value="FDF"/>
    <property type="match status" value="1"/>
</dbReference>
<dbReference type="SMART" id="SM01271">
    <property type="entry name" value="LSM14"/>
    <property type="match status" value="1"/>
</dbReference>
<dbReference type="SUPFAM" id="SSF50182">
    <property type="entry name" value="Sm-like ribonucleoproteins"/>
    <property type="match status" value="1"/>
</dbReference>
<dbReference type="PROSITE" id="PS51512">
    <property type="entry name" value="DFDF"/>
    <property type="match status" value="1"/>
</dbReference>
<dbReference type="PROSITE" id="PS51513">
    <property type="entry name" value="FFD"/>
    <property type="match status" value="1"/>
</dbReference>
<dbReference type="PROSITE" id="PS52002">
    <property type="entry name" value="SM"/>
    <property type="match status" value="1"/>
</dbReference>
<dbReference type="PROSITE" id="PS51536">
    <property type="entry name" value="TFG"/>
    <property type="match status" value="1"/>
</dbReference>
<protein>
    <recommendedName>
        <fullName>Protein LSM14 homolog B</fullName>
    </recommendedName>
    <alternativeName>
        <fullName evidence="9">RNA-associated protein 55B</fullName>
        <shortName evidence="9">hRAP55B</shortName>
    </alternativeName>
</protein>
<keyword id="KW-0007">Acetylation</keyword>
<keyword id="KW-0025">Alternative splicing</keyword>
<keyword id="KW-0963">Cytoplasm</keyword>
<keyword id="KW-0217">Developmental protein</keyword>
<keyword id="KW-0221">Differentiation</keyword>
<keyword id="KW-1017">Isopeptide bond</keyword>
<keyword id="KW-0469">Meiosis</keyword>
<keyword id="KW-0488">Methylation</keyword>
<keyword id="KW-0896">Oogenesis</keyword>
<keyword id="KW-0597">Phosphoprotein</keyword>
<keyword id="KW-1267">Proteomics identification</keyword>
<keyword id="KW-1185">Reference proteome</keyword>
<keyword id="KW-0687">Ribonucleoprotein</keyword>
<keyword id="KW-0810">Translation regulation</keyword>
<keyword id="KW-0832">Ubl conjugation</keyword>
<name>LS14B_HUMAN</name>
<sequence length="385" mass="42071">MSGSSGTPYLGSKISLISKAQIRYEGILYTIDTDNSTVALAKVRSFGTEDRPTDRPAPPREEIYEYIIFRGSDIKDITVCEPPKAQHTLPQDPAIVQSSLGSASASPFQPHVPYSPFRGMAPYGPLAASSLLSQQYAASLGLGAGFPSIPVGKSPMVEQAVQTGSADNLNAKKLLPGKGTTGTQLNGRQAQPSSKTASDVVQPAAVQAQGQVNDENRRPQRRRSGNRRTRNRSRGQNRPTNVKENTIKFEGDFDFESANAQFNREELDKEFKKKLNFKDDKAEKGEEKDLAVVTQSAEAPAEEDLLGPNCYYDKSKSFFDNISSELKTSSRRTTWAEERKLNTETFGVSGRFLRGRSSRGGFRGGRGNGTTRRNPTSHRAGTGRV</sequence>
<accession>Q9BX40</accession>
<accession>Q6PFW8</accession>
<accession>Q96LH8</accession>
<feature type="initiator methionine" description="Removed" evidence="13">
    <location>
        <position position="1"/>
    </location>
</feature>
<feature type="chain" id="PRO_0000187093" description="Protein LSM14 homolog B">
    <location>
        <begin position="2"/>
        <end position="385"/>
    </location>
</feature>
<feature type="domain" description="Sm" evidence="4">
    <location>
        <begin position="2"/>
        <end position="83"/>
    </location>
</feature>
<feature type="domain" description="DFDF" evidence="3">
    <location>
        <begin position="241"/>
        <end position="277"/>
    </location>
</feature>
<feature type="region of interest" description="Disordered" evidence="5">
    <location>
        <begin position="164"/>
        <end position="246"/>
    </location>
</feature>
<feature type="region of interest" description="Disordered" evidence="5">
    <location>
        <begin position="357"/>
        <end position="385"/>
    </location>
</feature>
<feature type="short sequence motif" description="FFD box">
    <location>
        <begin position="310"/>
        <end position="326"/>
    </location>
</feature>
<feature type="short sequence motif" description="TFG box">
    <location>
        <begin position="330"/>
        <end position="350"/>
    </location>
</feature>
<feature type="compositionally biased region" description="Polar residues" evidence="5">
    <location>
        <begin position="181"/>
        <end position="196"/>
    </location>
</feature>
<feature type="compositionally biased region" description="Low complexity" evidence="5">
    <location>
        <begin position="197"/>
        <end position="212"/>
    </location>
</feature>
<feature type="compositionally biased region" description="Basic residues" evidence="5">
    <location>
        <begin position="219"/>
        <end position="235"/>
    </location>
</feature>
<feature type="modified residue" description="N-acetylserine" evidence="13">
    <location>
        <position position="2"/>
    </location>
</feature>
<feature type="modified residue" description="Phosphoserine" evidence="12">
    <location>
        <position position="106"/>
    </location>
</feature>
<feature type="modified residue" description="Phosphoserine" evidence="12">
    <location>
        <position position="115"/>
    </location>
</feature>
<feature type="modified residue" description="Phosphoserine" evidence="12 14">
    <location>
        <position position="154"/>
    </location>
</feature>
<feature type="modified residue" description="Phosphoserine" evidence="15">
    <location>
        <position position="165"/>
    </location>
</feature>
<feature type="modified residue" description="Phosphoserine" evidence="15">
    <location>
        <position position="329"/>
    </location>
</feature>
<feature type="modified residue" description="Phosphoserine" evidence="15">
    <location>
        <position position="349"/>
    </location>
</feature>
<feature type="modified residue" description="Omega-N-methylarginine" evidence="2">
    <location>
        <position position="351"/>
    </location>
</feature>
<feature type="cross-link" description="Glycyl lysine isopeptide (Lys-Gly) (interchain with G-Cter in SUMO2)" evidence="16">
    <location>
        <position position="248"/>
    </location>
</feature>
<feature type="splice variant" id="VSP_014658" description="In isoform 3." evidence="7">
    <location>
        <begin position="1"/>
        <end position="44"/>
    </location>
</feature>
<feature type="splice variant" id="VSP_014659" description="In isoform 3." evidence="7">
    <original>SFGTEDRPTDRPAPPREEIYEYIIFRGSDIKDITVCEPPKAQHTLPQDPAIVQSSLGSASASPFQPHVPYSPFRGMAPYGPLAASSLLSQQYAASLGL</original>
    <variation>MAPYGPLAASSLLSQQYAASLGLEKLVSPPASAAASSPSSSPSPQPVSELDLSSEPQQLTAKGCLFCFRSLFTYTQSHIVLFRVPTGPGTLEREEMER</variation>
    <location>
        <begin position="45"/>
        <end position="142"/>
    </location>
</feature>
<feature type="splice variant" id="VSP_014660" description="In isoform 2." evidence="8">
    <original>GAGFPSIPVGKSPMVEQAVQTGSADNLNAKKLLPGKGTTGTQLNGRQAQPSSKTASDVVQPAAVQAQGQVNDENRRPQ</original>
    <variation>EKLVSPPASAAASSPSSSPSPQPVSELDLSSEPQQLTAKGNSSLGELHAVLQTILRARGKAADRMTVAVADHLPSPCS</variation>
    <location>
        <begin position="143"/>
        <end position="220"/>
    </location>
</feature>
<feature type="splice variant" id="VSP_014661" description="In isoform 3." evidence="7">
    <original>KLNFKDDKAE</original>
    <variation>RPILLLVFWT</variation>
    <location>
        <begin position="274"/>
        <end position="283"/>
    </location>
</feature>
<feature type="splice variant" id="VSP_014662" description="In isoform 3." evidence="7">
    <location>
        <begin position="284"/>
        <end position="385"/>
    </location>
</feature>
<feature type="sequence conflict" description="In Ref. 4; BX354437." evidence="10" ref="4">
    <original>Y</original>
    <variation>N</variation>
    <location>
        <position position="66"/>
    </location>
</feature>
<feature type="sequence conflict" description="In Ref. 4; BX354437." evidence="10" ref="4">
    <original>H</original>
    <variation>N</variation>
    <location>
        <position position="87"/>
    </location>
</feature>
<feature type="sequence conflict" description="In Ref. 4; BX354437." evidence="10" ref="4">
    <original>Y</original>
    <variation>N</variation>
    <location>
        <position position="114"/>
    </location>
</feature>
<evidence type="ECO:0000250" key="1">
    <source>
        <dbReference type="UniProtKB" id="Q68FI1"/>
    </source>
</evidence>
<evidence type="ECO:0000250" key="2">
    <source>
        <dbReference type="UniProtKB" id="Q8CGC4"/>
    </source>
</evidence>
<evidence type="ECO:0000255" key="3">
    <source>
        <dbReference type="PROSITE-ProRule" id="PRU00845"/>
    </source>
</evidence>
<evidence type="ECO:0000255" key="4">
    <source>
        <dbReference type="PROSITE-ProRule" id="PRU01346"/>
    </source>
</evidence>
<evidence type="ECO:0000256" key="5">
    <source>
        <dbReference type="SAM" id="MobiDB-lite"/>
    </source>
</evidence>
<evidence type="ECO:0000269" key="6">
    <source>
    </source>
</evidence>
<evidence type="ECO:0000303" key="7">
    <source>
    </source>
</evidence>
<evidence type="ECO:0000303" key="8">
    <source>
    </source>
</evidence>
<evidence type="ECO:0000303" key="9">
    <source>
    </source>
</evidence>
<evidence type="ECO:0000305" key="10"/>
<evidence type="ECO:0000312" key="11">
    <source>
        <dbReference type="HGNC" id="HGNC:15887"/>
    </source>
</evidence>
<evidence type="ECO:0007744" key="12">
    <source>
    </source>
</evidence>
<evidence type="ECO:0007744" key="13">
    <source>
    </source>
</evidence>
<evidence type="ECO:0007744" key="14">
    <source>
    </source>
</evidence>
<evidence type="ECO:0007744" key="15">
    <source>
    </source>
</evidence>
<evidence type="ECO:0007744" key="16">
    <source>
    </source>
</evidence>
<comment type="function">
    <text evidence="2">mRNA-binding protein essential for female fertility, oocyte meiotic maturation and the assembly of MARDO (mitochondria-associated ribonucleoprotein domain), a membraneless compartment that stores maternal mRNAs in oocytes. Ensures the proper accumulation and clearance of mRNAs essential for oocyte meiotic maturation and the normal progression from Meiosis I to Meiosis II in oocytes. Promotes the translation of some oogenesis-related mRNAs. Regulates the expression and/or localization of some key P-body proteins in oocytes. Essential for the assembly of the primordial follicle in the ovary.</text>
</comment>
<comment type="subunit">
    <text evidence="1 6">Component of a ribonucleoprotein (RNP) complex (By similarity). Interacts with DDX6 (PubMed:31422817).</text>
</comment>
<comment type="interaction">
    <interactant intactId="EBI-19133880">
        <id>Q9BX40-2</id>
    </interactant>
    <interactant intactId="EBI-744302">
        <id>P14136</id>
        <label>GFAP</label>
    </interactant>
    <organismsDiffer>false</organismsDiffer>
    <experiments>3</experiments>
</comment>
<comment type="interaction">
    <interactant intactId="EBI-19133880">
        <id>Q9BX40-2</id>
    </interactant>
    <interactant intactId="EBI-748420">
        <id>Q9NSC5</id>
        <label>HOMER3</label>
    </interactant>
    <organismsDiffer>false</organismsDiffer>
    <experiments>3</experiments>
</comment>
<comment type="interaction">
    <interactant intactId="EBI-19133880">
        <id>Q9BX40-2</id>
    </interactant>
    <interactant intactId="EBI-1055254">
        <id>Q8WXH2</id>
        <label>JPH3</label>
    </interactant>
    <organismsDiffer>false</organismsDiffer>
    <experiments>3</experiments>
</comment>
<comment type="interaction">
    <interactant intactId="EBI-19133880">
        <id>Q9BX40-2</id>
    </interactant>
    <interactant intactId="EBI-741158">
        <id>Q96HA8</id>
        <label>NTAQ1</label>
    </interactant>
    <organismsDiffer>false</organismsDiffer>
    <experiments>3</experiments>
</comment>
<comment type="interaction">
    <interactant intactId="EBI-19133880">
        <id>Q9BX40-2</id>
    </interactant>
    <interactant intactId="EBI-11955057">
        <id>Q8N8B7-2</id>
        <label>TCEANC</label>
    </interactant>
    <organismsDiffer>false</organismsDiffer>
    <experiments>3</experiments>
</comment>
<comment type="subcellular location">
    <subcellularLocation>
        <location evidence="2">Cytoplasm</location>
        <location evidence="2">Cytoplasmic ribonucleoprotein granule</location>
    </subcellularLocation>
    <text evidence="2">Localizes to MARDO (mitochondria-associated ribonucleoprotein domain), a mitochondria-associated membraneless compartment that stores mRNAs in oocytes.</text>
</comment>
<comment type="alternative products">
    <event type="alternative splicing"/>
    <isoform>
        <id>Q9BX40-1</id>
        <name>1</name>
        <sequence type="displayed"/>
    </isoform>
    <isoform>
        <id>Q9BX40-2</id>
        <name>2</name>
        <sequence type="described" ref="VSP_014660"/>
    </isoform>
    <isoform>
        <id>Q9BX40-3</id>
        <name>3</name>
        <sequence type="described" ref="VSP_014658 VSP_014659 VSP_014661 VSP_014662"/>
    </isoform>
</comment>
<comment type="similarity">
    <text evidence="10">Belongs to the LSM14 family.</text>
</comment>
<organism>
    <name type="scientific">Homo sapiens</name>
    <name type="common">Human</name>
    <dbReference type="NCBI Taxonomy" id="9606"/>
    <lineage>
        <taxon>Eukaryota</taxon>
        <taxon>Metazoa</taxon>
        <taxon>Chordata</taxon>
        <taxon>Craniata</taxon>
        <taxon>Vertebrata</taxon>
        <taxon>Euteleostomi</taxon>
        <taxon>Mammalia</taxon>
        <taxon>Eutheria</taxon>
        <taxon>Euarchontoglires</taxon>
        <taxon>Primates</taxon>
        <taxon>Haplorrhini</taxon>
        <taxon>Catarrhini</taxon>
        <taxon>Hominidae</taxon>
        <taxon>Homo</taxon>
    </lineage>
</organism>
<proteinExistence type="evidence at protein level"/>
<reference key="1">
    <citation type="journal article" date="2004" name="Nat. Genet.">
        <title>Complete sequencing and characterization of 21,243 full-length human cDNAs.</title>
        <authorList>
            <person name="Ota T."/>
            <person name="Suzuki Y."/>
            <person name="Nishikawa T."/>
            <person name="Otsuki T."/>
            <person name="Sugiyama T."/>
            <person name="Irie R."/>
            <person name="Wakamatsu A."/>
            <person name="Hayashi K."/>
            <person name="Sato H."/>
            <person name="Nagai K."/>
            <person name="Kimura K."/>
            <person name="Makita H."/>
            <person name="Sekine M."/>
            <person name="Obayashi M."/>
            <person name="Nishi T."/>
            <person name="Shibahara T."/>
            <person name="Tanaka T."/>
            <person name="Ishii S."/>
            <person name="Yamamoto J."/>
            <person name="Saito K."/>
            <person name="Kawai Y."/>
            <person name="Isono Y."/>
            <person name="Nakamura Y."/>
            <person name="Nagahari K."/>
            <person name="Murakami K."/>
            <person name="Yasuda T."/>
            <person name="Iwayanagi T."/>
            <person name="Wagatsuma M."/>
            <person name="Shiratori A."/>
            <person name="Sudo H."/>
            <person name="Hosoiri T."/>
            <person name="Kaku Y."/>
            <person name="Kodaira H."/>
            <person name="Kondo H."/>
            <person name="Sugawara M."/>
            <person name="Takahashi M."/>
            <person name="Kanda K."/>
            <person name="Yokoi T."/>
            <person name="Furuya T."/>
            <person name="Kikkawa E."/>
            <person name="Omura Y."/>
            <person name="Abe K."/>
            <person name="Kamihara K."/>
            <person name="Katsuta N."/>
            <person name="Sato K."/>
            <person name="Tanikawa M."/>
            <person name="Yamazaki M."/>
            <person name="Ninomiya K."/>
            <person name="Ishibashi T."/>
            <person name="Yamashita H."/>
            <person name="Murakawa K."/>
            <person name="Fujimori K."/>
            <person name="Tanai H."/>
            <person name="Kimata M."/>
            <person name="Watanabe M."/>
            <person name="Hiraoka S."/>
            <person name="Chiba Y."/>
            <person name="Ishida S."/>
            <person name="Ono Y."/>
            <person name="Takiguchi S."/>
            <person name="Watanabe S."/>
            <person name="Yosida M."/>
            <person name="Hotuta T."/>
            <person name="Kusano J."/>
            <person name="Kanehori K."/>
            <person name="Takahashi-Fujii A."/>
            <person name="Hara H."/>
            <person name="Tanase T.-O."/>
            <person name="Nomura Y."/>
            <person name="Togiya S."/>
            <person name="Komai F."/>
            <person name="Hara R."/>
            <person name="Takeuchi K."/>
            <person name="Arita M."/>
            <person name="Imose N."/>
            <person name="Musashino K."/>
            <person name="Yuuki H."/>
            <person name="Oshima A."/>
            <person name="Sasaki N."/>
            <person name="Aotsuka S."/>
            <person name="Yoshikawa Y."/>
            <person name="Matsunawa H."/>
            <person name="Ichihara T."/>
            <person name="Shiohata N."/>
            <person name="Sano S."/>
            <person name="Moriya S."/>
            <person name="Momiyama H."/>
            <person name="Satoh N."/>
            <person name="Takami S."/>
            <person name="Terashima Y."/>
            <person name="Suzuki O."/>
            <person name="Nakagawa S."/>
            <person name="Senoh A."/>
            <person name="Mizoguchi H."/>
            <person name="Goto Y."/>
            <person name="Shimizu F."/>
            <person name="Wakebe H."/>
            <person name="Hishigaki H."/>
            <person name="Watanabe T."/>
            <person name="Sugiyama A."/>
            <person name="Takemoto M."/>
            <person name="Kawakami B."/>
            <person name="Yamazaki M."/>
            <person name="Watanabe K."/>
            <person name="Kumagai A."/>
            <person name="Itakura S."/>
            <person name="Fukuzumi Y."/>
            <person name="Fujimori Y."/>
            <person name="Komiyama M."/>
            <person name="Tashiro H."/>
            <person name="Tanigami A."/>
            <person name="Fujiwara T."/>
            <person name="Ono T."/>
            <person name="Yamada K."/>
            <person name="Fujii Y."/>
            <person name="Ozaki K."/>
            <person name="Hirao M."/>
            <person name="Ohmori Y."/>
            <person name="Kawabata A."/>
            <person name="Hikiji T."/>
            <person name="Kobatake N."/>
            <person name="Inagaki H."/>
            <person name="Ikema Y."/>
            <person name="Okamoto S."/>
            <person name="Okitani R."/>
            <person name="Kawakami T."/>
            <person name="Noguchi S."/>
            <person name="Itoh T."/>
            <person name="Shigeta K."/>
            <person name="Senba T."/>
            <person name="Matsumura K."/>
            <person name="Nakajima Y."/>
            <person name="Mizuno T."/>
            <person name="Morinaga M."/>
            <person name="Sasaki M."/>
            <person name="Togashi T."/>
            <person name="Oyama M."/>
            <person name="Hata H."/>
            <person name="Watanabe M."/>
            <person name="Komatsu T."/>
            <person name="Mizushima-Sugano J."/>
            <person name="Satoh T."/>
            <person name="Shirai Y."/>
            <person name="Takahashi Y."/>
            <person name="Nakagawa K."/>
            <person name="Okumura K."/>
            <person name="Nagase T."/>
            <person name="Nomura N."/>
            <person name="Kikuchi H."/>
            <person name="Masuho Y."/>
            <person name="Yamashita R."/>
            <person name="Nakai K."/>
            <person name="Yada T."/>
            <person name="Nakamura Y."/>
            <person name="Ohara O."/>
            <person name="Isogai T."/>
            <person name="Sugano S."/>
        </authorList>
    </citation>
    <scope>NUCLEOTIDE SEQUENCE [LARGE SCALE MRNA] (ISOFORM 3)</scope>
    <source>
        <tissue>Testis</tissue>
    </source>
</reference>
<reference key="2">
    <citation type="journal article" date="2001" name="Nature">
        <title>The DNA sequence and comparative analysis of human chromosome 20.</title>
        <authorList>
            <person name="Deloukas P."/>
            <person name="Matthews L.H."/>
            <person name="Ashurst J.L."/>
            <person name="Burton J."/>
            <person name="Gilbert J.G.R."/>
            <person name="Jones M."/>
            <person name="Stavrides G."/>
            <person name="Almeida J.P."/>
            <person name="Babbage A.K."/>
            <person name="Bagguley C.L."/>
            <person name="Bailey J."/>
            <person name="Barlow K.F."/>
            <person name="Bates K.N."/>
            <person name="Beard L.M."/>
            <person name="Beare D.M."/>
            <person name="Beasley O.P."/>
            <person name="Bird C.P."/>
            <person name="Blakey S.E."/>
            <person name="Bridgeman A.M."/>
            <person name="Brown A.J."/>
            <person name="Buck D."/>
            <person name="Burrill W.D."/>
            <person name="Butler A.P."/>
            <person name="Carder C."/>
            <person name="Carter N.P."/>
            <person name="Chapman J.C."/>
            <person name="Clamp M."/>
            <person name="Clark G."/>
            <person name="Clark L.N."/>
            <person name="Clark S.Y."/>
            <person name="Clee C.M."/>
            <person name="Clegg S."/>
            <person name="Cobley V.E."/>
            <person name="Collier R.E."/>
            <person name="Connor R.E."/>
            <person name="Corby N.R."/>
            <person name="Coulson A."/>
            <person name="Coville G.J."/>
            <person name="Deadman R."/>
            <person name="Dhami P.D."/>
            <person name="Dunn M."/>
            <person name="Ellington A.G."/>
            <person name="Frankland J.A."/>
            <person name="Fraser A."/>
            <person name="French L."/>
            <person name="Garner P."/>
            <person name="Grafham D.V."/>
            <person name="Griffiths C."/>
            <person name="Griffiths M.N.D."/>
            <person name="Gwilliam R."/>
            <person name="Hall R.E."/>
            <person name="Hammond S."/>
            <person name="Harley J.L."/>
            <person name="Heath P.D."/>
            <person name="Ho S."/>
            <person name="Holden J.L."/>
            <person name="Howden P.J."/>
            <person name="Huckle E."/>
            <person name="Hunt A.R."/>
            <person name="Hunt S.E."/>
            <person name="Jekosch K."/>
            <person name="Johnson C.M."/>
            <person name="Johnson D."/>
            <person name="Kay M.P."/>
            <person name="Kimberley A.M."/>
            <person name="King A."/>
            <person name="Knights A."/>
            <person name="Laird G.K."/>
            <person name="Lawlor S."/>
            <person name="Lehvaeslaiho M.H."/>
            <person name="Leversha M.A."/>
            <person name="Lloyd C."/>
            <person name="Lloyd D.M."/>
            <person name="Lovell J.D."/>
            <person name="Marsh V.L."/>
            <person name="Martin S.L."/>
            <person name="McConnachie L.J."/>
            <person name="McLay K."/>
            <person name="McMurray A.A."/>
            <person name="Milne S.A."/>
            <person name="Mistry D."/>
            <person name="Moore M.J.F."/>
            <person name="Mullikin J.C."/>
            <person name="Nickerson T."/>
            <person name="Oliver K."/>
            <person name="Parker A."/>
            <person name="Patel R."/>
            <person name="Pearce T.A.V."/>
            <person name="Peck A.I."/>
            <person name="Phillimore B.J.C.T."/>
            <person name="Prathalingam S.R."/>
            <person name="Plumb R.W."/>
            <person name="Ramsay H."/>
            <person name="Rice C.M."/>
            <person name="Ross M.T."/>
            <person name="Scott C.E."/>
            <person name="Sehra H.K."/>
            <person name="Shownkeen R."/>
            <person name="Sims S."/>
            <person name="Skuce C.D."/>
            <person name="Smith M.L."/>
            <person name="Soderlund C."/>
            <person name="Steward C.A."/>
            <person name="Sulston J.E."/>
            <person name="Swann R.M."/>
            <person name="Sycamore N."/>
            <person name="Taylor R."/>
            <person name="Tee L."/>
            <person name="Thomas D.W."/>
            <person name="Thorpe A."/>
            <person name="Tracey A."/>
            <person name="Tromans A.C."/>
            <person name="Vaudin M."/>
            <person name="Wall M."/>
            <person name="Wallis J.M."/>
            <person name="Whitehead S.L."/>
            <person name="Whittaker P."/>
            <person name="Willey D.L."/>
            <person name="Williams L."/>
            <person name="Williams S.A."/>
            <person name="Wilming L."/>
            <person name="Wray P.W."/>
            <person name="Hubbard T."/>
            <person name="Durbin R.M."/>
            <person name="Bentley D.R."/>
            <person name="Beck S."/>
            <person name="Rogers J."/>
        </authorList>
    </citation>
    <scope>NUCLEOTIDE SEQUENCE [LARGE SCALE GENOMIC DNA]</scope>
</reference>
<reference key="3">
    <citation type="journal article" date="2004" name="Genome Res.">
        <title>The status, quality, and expansion of the NIH full-length cDNA project: the Mammalian Gene Collection (MGC).</title>
        <authorList>
            <consortium name="The MGC Project Team"/>
        </authorList>
    </citation>
    <scope>NUCLEOTIDE SEQUENCE [LARGE SCALE MRNA] (ISOFORM 2)</scope>
    <source>
        <tissue>Ovary</tissue>
    </source>
</reference>
<reference key="4">
    <citation type="submission" date="2003-04" db="EMBL/GenBank/DDBJ databases">
        <title>Full-length cDNA libraries and normalization.</title>
        <authorList>
            <person name="Li W.B."/>
            <person name="Gruber C."/>
            <person name="Jessee J."/>
            <person name="Polayes D."/>
        </authorList>
    </citation>
    <scope>NUCLEOTIDE SEQUENCE [LARGE SCALE MRNA] OF 57-361 (ISOFORM 1)</scope>
    <source>
        <tissue>Neuroblastoma</tissue>
    </source>
</reference>
<reference key="5">
    <citation type="journal article" date="2008" name="Proc. Natl. Acad. Sci. U.S.A.">
        <title>A quantitative atlas of mitotic phosphorylation.</title>
        <authorList>
            <person name="Dephoure N."/>
            <person name="Zhou C."/>
            <person name="Villen J."/>
            <person name="Beausoleil S.A."/>
            <person name="Bakalarski C.E."/>
            <person name="Elledge S.J."/>
            <person name="Gygi S.P."/>
        </authorList>
    </citation>
    <scope>PHOSPHORYLATION [LARGE SCALE ANALYSIS] AT SER-106; SER-115 AND SER-154</scope>
    <scope>IDENTIFICATION BY MASS SPECTROMETRY [LARGE SCALE ANALYSIS]</scope>
    <source>
        <tissue>Cervix carcinoma</tissue>
    </source>
</reference>
<reference key="6">
    <citation type="journal article" date="2009" name="Anal. Chem.">
        <title>Lys-N and trypsin cover complementary parts of the phosphoproteome in a refined SCX-based approach.</title>
        <authorList>
            <person name="Gauci S."/>
            <person name="Helbig A.O."/>
            <person name="Slijper M."/>
            <person name="Krijgsveld J."/>
            <person name="Heck A.J."/>
            <person name="Mohammed S."/>
        </authorList>
    </citation>
    <scope>ACETYLATION [LARGE SCALE ANALYSIS] AT SER-2</scope>
    <scope>CLEAVAGE OF INITIATOR METHIONINE [LARGE SCALE ANALYSIS]</scope>
    <scope>IDENTIFICATION BY MASS SPECTROMETRY [LARGE SCALE ANALYSIS]</scope>
</reference>
<reference key="7">
    <citation type="journal article" date="2009" name="Int. J. Biochem. Cell Biol.">
        <title>RAP55: insights into an evolutionarily conserved protein family.</title>
        <authorList>
            <person name="Marnef A."/>
            <person name="Sommerville J."/>
            <person name="Ladomery M.R."/>
        </authorList>
    </citation>
    <scope>REVIEW</scope>
</reference>
<reference key="8">
    <citation type="journal article" date="2010" name="Sci. Signal.">
        <title>Quantitative phosphoproteomics reveals widespread full phosphorylation site occupancy during mitosis.</title>
        <authorList>
            <person name="Olsen J.V."/>
            <person name="Vermeulen M."/>
            <person name="Santamaria A."/>
            <person name="Kumar C."/>
            <person name="Miller M.L."/>
            <person name="Jensen L.J."/>
            <person name="Gnad F."/>
            <person name="Cox J."/>
            <person name="Jensen T.S."/>
            <person name="Nigg E.A."/>
            <person name="Brunak S."/>
            <person name="Mann M."/>
        </authorList>
    </citation>
    <scope>PHOSPHORYLATION [LARGE SCALE ANALYSIS] AT SER-154</scope>
    <scope>IDENTIFICATION BY MASS SPECTROMETRY [LARGE SCALE ANALYSIS]</scope>
    <source>
        <tissue>Cervix carcinoma</tissue>
    </source>
</reference>
<reference key="9">
    <citation type="journal article" date="2011" name="BMC Syst. Biol.">
        <title>Initial characterization of the human central proteome.</title>
        <authorList>
            <person name="Burkard T.R."/>
            <person name="Planyavsky M."/>
            <person name="Kaupe I."/>
            <person name="Breitwieser F.P."/>
            <person name="Buerckstuemmer T."/>
            <person name="Bennett K.L."/>
            <person name="Superti-Furga G."/>
            <person name="Colinge J."/>
        </authorList>
    </citation>
    <scope>IDENTIFICATION BY MASS SPECTROMETRY [LARGE SCALE ANALYSIS]</scope>
</reference>
<reference key="10">
    <citation type="journal article" date="2013" name="J. Proteome Res.">
        <title>Toward a comprehensive characterization of a human cancer cell phosphoproteome.</title>
        <authorList>
            <person name="Zhou H."/>
            <person name="Di Palma S."/>
            <person name="Preisinger C."/>
            <person name="Peng M."/>
            <person name="Polat A.N."/>
            <person name="Heck A.J."/>
            <person name="Mohammed S."/>
        </authorList>
    </citation>
    <scope>PHOSPHORYLATION [LARGE SCALE ANALYSIS] AT SER-165; SER-329 AND SER-349</scope>
    <scope>IDENTIFICATION BY MASS SPECTROMETRY [LARGE SCALE ANALYSIS]</scope>
    <source>
        <tissue>Erythroleukemia</tissue>
    </source>
</reference>
<reference key="11">
    <citation type="journal article" date="2017" name="Nat. Struct. Mol. Biol.">
        <title>Site-specific mapping of the human SUMO proteome reveals co-modification with phosphorylation.</title>
        <authorList>
            <person name="Hendriks I.A."/>
            <person name="Lyon D."/>
            <person name="Young C."/>
            <person name="Jensen L.J."/>
            <person name="Vertegaal A.C."/>
            <person name="Nielsen M.L."/>
        </authorList>
    </citation>
    <scope>SUMOYLATION [LARGE SCALE ANALYSIS] AT LYS-248</scope>
    <scope>IDENTIFICATION BY MASS SPECTROMETRY [LARGE SCALE ANALYSIS]</scope>
</reference>
<reference key="12">
    <citation type="journal article" date="2019" name="Am. J. Hum. Genet.">
        <title>Rare de novo missense variants in RNA helicase DDX6 cause intellectual disability and dysmorphic features and lead to P-body defects and RNA dysregulation.</title>
        <authorList>
            <person name="Balak C."/>
            <person name="Benard M."/>
            <person name="Schaefer E."/>
            <person name="Iqbal S."/>
            <person name="Ramsey K."/>
            <person name="Ernoult-Lange M."/>
            <person name="Mattioli F."/>
            <person name="Llaci L."/>
            <person name="Geoffroy V."/>
            <person name="Courel M."/>
            <person name="Naymik M."/>
            <person name="Bachman K.K."/>
            <person name="Pfundt R."/>
            <person name="Rump P."/>
            <person name="Ter Beest J."/>
            <person name="Wentzensen I.M."/>
            <person name="Monaghan K.G."/>
            <person name="McWalter K."/>
            <person name="Richholt R."/>
            <person name="Le Bechec A."/>
            <person name="Jepsen W."/>
            <person name="De Both M."/>
            <person name="Belnap N."/>
            <person name="Boland A."/>
            <person name="Piras I.S."/>
            <person name="Deleuze J.F."/>
            <person name="Szelinger S."/>
            <person name="Dollfus H."/>
            <person name="Chelly J."/>
            <person name="Muller J."/>
            <person name="Campbell A."/>
            <person name="Lal D."/>
            <person name="Rangasamy S."/>
            <person name="Mandel J.L."/>
            <person name="Narayanan V."/>
            <person name="Huentelman M."/>
            <person name="Weil D."/>
            <person name="Piton A."/>
        </authorList>
    </citation>
    <scope>INTERACTION WITH DDX6</scope>
</reference>